<evidence type="ECO:0000255" key="1">
    <source>
        <dbReference type="HAMAP-Rule" id="MF_00444"/>
    </source>
</evidence>
<keyword id="KW-0963">Cytoplasm</keyword>
<keyword id="KW-0378">Hydrolase</keyword>
<keyword id="KW-0645">Protease</keyword>
<keyword id="KW-0720">Serine protease</keyword>
<name>CLPP_LEGPC</name>
<organism>
    <name type="scientific">Legionella pneumophila (strain Corby)</name>
    <dbReference type="NCBI Taxonomy" id="400673"/>
    <lineage>
        <taxon>Bacteria</taxon>
        <taxon>Pseudomonadati</taxon>
        <taxon>Pseudomonadota</taxon>
        <taxon>Gammaproteobacteria</taxon>
        <taxon>Legionellales</taxon>
        <taxon>Legionellaceae</taxon>
        <taxon>Legionella</taxon>
    </lineage>
</organism>
<dbReference type="EC" id="3.4.21.92" evidence="1"/>
<dbReference type="EMBL" id="CP000675">
    <property type="protein sequence ID" value="ABQ55267.1"/>
    <property type="molecule type" value="Genomic_DNA"/>
</dbReference>
<dbReference type="RefSeq" id="WP_011946767.1">
    <property type="nucleotide sequence ID" value="NC_009494.2"/>
</dbReference>
<dbReference type="SMR" id="A5ID17"/>
<dbReference type="MEROPS" id="S14.001"/>
<dbReference type="KEGG" id="lpc:LPC_1306"/>
<dbReference type="HOGENOM" id="CLU_058707_3_2_6"/>
<dbReference type="GO" id="GO:0005737">
    <property type="term" value="C:cytoplasm"/>
    <property type="evidence" value="ECO:0007669"/>
    <property type="project" value="UniProtKB-SubCell"/>
</dbReference>
<dbReference type="GO" id="GO:0009368">
    <property type="term" value="C:endopeptidase Clp complex"/>
    <property type="evidence" value="ECO:0007669"/>
    <property type="project" value="TreeGrafter"/>
</dbReference>
<dbReference type="GO" id="GO:0004176">
    <property type="term" value="F:ATP-dependent peptidase activity"/>
    <property type="evidence" value="ECO:0007669"/>
    <property type="project" value="InterPro"/>
</dbReference>
<dbReference type="GO" id="GO:0051117">
    <property type="term" value="F:ATPase binding"/>
    <property type="evidence" value="ECO:0007669"/>
    <property type="project" value="TreeGrafter"/>
</dbReference>
<dbReference type="GO" id="GO:0004252">
    <property type="term" value="F:serine-type endopeptidase activity"/>
    <property type="evidence" value="ECO:0007669"/>
    <property type="project" value="UniProtKB-UniRule"/>
</dbReference>
<dbReference type="GO" id="GO:0006515">
    <property type="term" value="P:protein quality control for misfolded or incompletely synthesized proteins"/>
    <property type="evidence" value="ECO:0007669"/>
    <property type="project" value="TreeGrafter"/>
</dbReference>
<dbReference type="CDD" id="cd07017">
    <property type="entry name" value="S14_ClpP_2"/>
    <property type="match status" value="1"/>
</dbReference>
<dbReference type="FunFam" id="3.90.226.10:FF:000001">
    <property type="entry name" value="ATP-dependent Clp protease proteolytic subunit"/>
    <property type="match status" value="1"/>
</dbReference>
<dbReference type="Gene3D" id="3.90.226.10">
    <property type="entry name" value="2-enoyl-CoA Hydratase, Chain A, domain 1"/>
    <property type="match status" value="1"/>
</dbReference>
<dbReference type="HAMAP" id="MF_00444">
    <property type="entry name" value="ClpP"/>
    <property type="match status" value="1"/>
</dbReference>
<dbReference type="InterPro" id="IPR001907">
    <property type="entry name" value="ClpP"/>
</dbReference>
<dbReference type="InterPro" id="IPR029045">
    <property type="entry name" value="ClpP/crotonase-like_dom_sf"/>
</dbReference>
<dbReference type="InterPro" id="IPR023562">
    <property type="entry name" value="ClpP/TepA"/>
</dbReference>
<dbReference type="InterPro" id="IPR033135">
    <property type="entry name" value="ClpP_His_AS"/>
</dbReference>
<dbReference type="InterPro" id="IPR018215">
    <property type="entry name" value="ClpP_Ser_AS"/>
</dbReference>
<dbReference type="NCBIfam" id="TIGR00493">
    <property type="entry name" value="clpP"/>
    <property type="match status" value="1"/>
</dbReference>
<dbReference type="NCBIfam" id="NF001368">
    <property type="entry name" value="PRK00277.1"/>
    <property type="match status" value="1"/>
</dbReference>
<dbReference type="NCBIfam" id="NF009205">
    <property type="entry name" value="PRK12553.1"/>
    <property type="match status" value="1"/>
</dbReference>
<dbReference type="PANTHER" id="PTHR10381">
    <property type="entry name" value="ATP-DEPENDENT CLP PROTEASE PROTEOLYTIC SUBUNIT"/>
    <property type="match status" value="1"/>
</dbReference>
<dbReference type="PANTHER" id="PTHR10381:SF70">
    <property type="entry name" value="ATP-DEPENDENT CLP PROTEASE PROTEOLYTIC SUBUNIT"/>
    <property type="match status" value="1"/>
</dbReference>
<dbReference type="Pfam" id="PF00574">
    <property type="entry name" value="CLP_protease"/>
    <property type="match status" value="1"/>
</dbReference>
<dbReference type="PRINTS" id="PR00127">
    <property type="entry name" value="CLPPROTEASEP"/>
</dbReference>
<dbReference type="SUPFAM" id="SSF52096">
    <property type="entry name" value="ClpP/crotonase"/>
    <property type="match status" value="1"/>
</dbReference>
<dbReference type="PROSITE" id="PS00382">
    <property type="entry name" value="CLP_PROTEASE_HIS"/>
    <property type="match status" value="1"/>
</dbReference>
<dbReference type="PROSITE" id="PS00381">
    <property type="entry name" value="CLP_PROTEASE_SER"/>
    <property type="match status" value="1"/>
</dbReference>
<sequence length="214" mass="23824">MPGYSDYIIRNASGLIPMVIEQTSRGERSYDIYSRLLKERIIFLLGEVEDHMANLVVAQLLFLESENPEKDISLYINSPGGVVTAGLAIYDTMQFIKPDVSTLCIGQAASAAALLLCAGAEGKRFCLPNSRVMIHQPLGGYRGQATDIEIHARETLAVRERLNNIMAKHTKKTPDQIMRDTERDNFMSATQAMEYGLIDKVLYDRQVAGHSTDL</sequence>
<comment type="function">
    <text evidence="1">Cleaves peptides in various proteins in a process that requires ATP hydrolysis. Has a chymotrypsin-like activity. Plays a major role in the degradation of misfolded proteins.</text>
</comment>
<comment type="catalytic activity">
    <reaction evidence="1">
        <text>Hydrolysis of proteins to small peptides in the presence of ATP and magnesium. alpha-casein is the usual test substrate. In the absence of ATP, only oligopeptides shorter than five residues are hydrolyzed (such as succinyl-Leu-Tyr-|-NHMec, and Leu-Tyr-Leu-|-Tyr-Trp, in which cleavage of the -Tyr-|-Leu- and -Tyr-|-Trp bonds also occurs).</text>
        <dbReference type="EC" id="3.4.21.92"/>
    </reaction>
</comment>
<comment type="subunit">
    <text evidence="1">Fourteen ClpP subunits assemble into 2 heptameric rings which stack back to back to give a disk-like structure with a central cavity, resembling the structure of eukaryotic proteasomes.</text>
</comment>
<comment type="subcellular location">
    <subcellularLocation>
        <location evidence="1">Cytoplasm</location>
    </subcellularLocation>
</comment>
<comment type="similarity">
    <text evidence="1">Belongs to the peptidase S14 family.</text>
</comment>
<accession>A5ID17</accession>
<feature type="chain" id="PRO_1000026105" description="ATP-dependent Clp protease proteolytic subunit">
    <location>
        <begin position="1"/>
        <end position="214"/>
    </location>
</feature>
<feature type="active site" description="Nucleophile" evidence="1">
    <location>
        <position position="110"/>
    </location>
</feature>
<feature type="active site" evidence="1">
    <location>
        <position position="135"/>
    </location>
</feature>
<reference key="1">
    <citation type="submission" date="2006-11" db="EMBL/GenBank/DDBJ databases">
        <title>Identification and characterization of a new conjugation/ type IVA secretion system (trb/tra) of L. pneumophila Corby localized on a mobile genomic island.</title>
        <authorList>
            <person name="Gloeckner G."/>
            <person name="Albert-Weissenberger C."/>
            <person name="Weinmann E."/>
            <person name="Jacobi S."/>
            <person name="Schunder E."/>
            <person name="Steinert M."/>
            <person name="Buchrieser C."/>
            <person name="Hacker J."/>
            <person name="Heuner K."/>
        </authorList>
    </citation>
    <scope>NUCLEOTIDE SEQUENCE [LARGE SCALE GENOMIC DNA]</scope>
    <source>
        <strain>Corby</strain>
    </source>
</reference>
<proteinExistence type="inferred from homology"/>
<protein>
    <recommendedName>
        <fullName evidence="1">ATP-dependent Clp protease proteolytic subunit</fullName>
        <ecNumber evidence="1">3.4.21.92</ecNumber>
    </recommendedName>
    <alternativeName>
        <fullName evidence="1">Endopeptidase Clp</fullName>
    </alternativeName>
</protein>
<gene>
    <name evidence="1" type="primary">clpP</name>
    <name type="ordered locus">LPC_1306</name>
</gene>